<sequence length="166" mass="17699">MARREEETKEFEERVVTINRVAKVVKGGRRFRFTALVVVGDKNGRVGFGTGKAQEVPEAIKKAVEAAKKDLVVVPRVEGTTPHTITGQYGSGSVFMKPAAPGTGVIAGGPVRAVLELAGITDILSKSLGSNTPINMVRATINGLQNLKNAEDVAKLRGKSVEELYN</sequence>
<organism>
    <name type="scientific">Staphylococcus epidermidis (strain ATCC 35984 / DSM 28319 / BCRC 17069 / CCUG 31568 / BM 3577 / RP62A)</name>
    <dbReference type="NCBI Taxonomy" id="176279"/>
    <lineage>
        <taxon>Bacteria</taxon>
        <taxon>Bacillati</taxon>
        <taxon>Bacillota</taxon>
        <taxon>Bacilli</taxon>
        <taxon>Bacillales</taxon>
        <taxon>Staphylococcaceae</taxon>
        <taxon>Staphylococcus</taxon>
    </lineage>
</organism>
<feature type="chain" id="PRO_0000131600" description="Small ribosomal subunit protein uS5">
    <location>
        <begin position="1"/>
        <end position="166"/>
    </location>
</feature>
<feature type="domain" description="S5 DRBM" evidence="1">
    <location>
        <begin position="11"/>
        <end position="74"/>
    </location>
</feature>
<reference key="1">
    <citation type="journal article" date="2005" name="J. Bacteriol.">
        <title>Insights on evolution of virulence and resistance from the complete genome analysis of an early methicillin-resistant Staphylococcus aureus strain and a biofilm-producing methicillin-resistant Staphylococcus epidermidis strain.</title>
        <authorList>
            <person name="Gill S.R."/>
            <person name="Fouts D.E."/>
            <person name="Archer G.L."/>
            <person name="Mongodin E.F."/>
            <person name="DeBoy R.T."/>
            <person name="Ravel J."/>
            <person name="Paulsen I.T."/>
            <person name="Kolonay J.F."/>
            <person name="Brinkac L.M."/>
            <person name="Beanan M.J."/>
            <person name="Dodson R.J."/>
            <person name="Daugherty S.C."/>
            <person name="Madupu R."/>
            <person name="Angiuoli S.V."/>
            <person name="Durkin A.S."/>
            <person name="Haft D.H."/>
            <person name="Vamathevan J.J."/>
            <person name="Khouri H."/>
            <person name="Utterback T.R."/>
            <person name="Lee C."/>
            <person name="Dimitrov G."/>
            <person name="Jiang L."/>
            <person name="Qin H."/>
            <person name="Weidman J."/>
            <person name="Tran K."/>
            <person name="Kang K.H."/>
            <person name="Hance I.R."/>
            <person name="Nelson K.E."/>
            <person name="Fraser C.M."/>
        </authorList>
    </citation>
    <scope>NUCLEOTIDE SEQUENCE [LARGE SCALE GENOMIC DNA]</scope>
    <source>
        <strain>ATCC 35984 / DSM 28319 / BCRC 17069 / CCUG 31568 / BM 3577 / RP62A</strain>
    </source>
</reference>
<gene>
    <name evidence="1" type="primary">rpsE</name>
    <name type="ordered locus">SERP1814</name>
</gene>
<name>RS5_STAEQ</name>
<protein>
    <recommendedName>
        <fullName evidence="1">Small ribosomal subunit protein uS5</fullName>
    </recommendedName>
    <alternativeName>
        <fullName evidence="2">30S ribosomal protein S5</fullName>
    </alternativeName>
</protein>
<dbReference type="EMBL" id="CP000029">
    <property type="protein sequence ID" value="AAW55138.1"/>
    <property type="molecule type" value="Genomic_DNA"/>
</dbReference>
<dbReference type="RefSeq" id="WP_001829701.1">
    <property type="nucleotide sequence ID" value="NC_002976.3"/>
</dbReference>
<dbReference type="SMR" id="Q5HM16"/>
<dbReference type="STRING" id="176279.SERP1814"/>
<dbReference type="GeneID" id="50018090"/>
<dbReference type="KEGG" id="ser:SERP1814"/>
<dbReference type="eggNOG" id="COG0098">
    <property type="taxonomic scope" value="Bacteria"/>
</dbReference>
<dbReference type="HOGENOM" id="CLU_065898_2_2_9"/>
<dbReference type="Proteomes" id="UP000000531">
    <property type="component" value="Chromosome"/>
</dbReference>
<dbReference type="GO" id="GO:0015935">
    <property type="term" value="C:small ribosomal subunit"/>
    <property type="evidence" value="ECO:0007669"/>
    <property type="project" value="InterPro"/>
</dbReference>
<dbReference type="GO" id="GO:0019843">
    <property type="term" value="F:rRNA binding"/>
    <property type="evidence" value="ECO:0007669"/>
    <property type="project" value="UniProtKB-UniRule"/>
</dbReference>
<dbReference type="GO" id="GO:0003735">
    <property type="term" value="F:structural constituent of ribosome"/>
    <property type="evidence" value="ECO:0007669"/>
    <property type="project" value="InterPro"/>
</dbReference>
<dbReference type="GO" id="GO:0006412">
    <property type="term" value="P:translation"/>
    <property type="evidence" value="ECO:0007669"/>
    <property type="project" value="UniProtKB-UniRule"/>
</dbReference>
<dbReference type="FunFam" id="3.30.160.20:FF:000001">
    <property type="entry name" value="30S ribosomal protein S5"/>
    <property type="match status" value="1"/>
</dbReference>
<dbReference type="FunFam" id="3.30.230.10:FF:000002">
    <property type="entry name" value="30S ribosomal protein S5"/>
    <property type="match status" value="1"/>
</dbReference>
<dbReference type="Gene3D" id="3.30.160.20">
    <property type="match status" value="1"/>
</dbReference>
<dbReference type="Gene3D" id="3.30.230.10">
    <property type="match status" value="1"/>
</dbReference>
<dbReference type="HAMAP" id="MF_01307_B">
    <property type="entry name" value="Ribosomal_uS5_B"/>
    <property type="match status" value="1"/>
</dbReference>
<dbReference type="InterPro" id="IPR020568">
    <property type="entry name" value="Ribosomal_Su5_D2-typ_SF"/>
</dbReference>
<dbReference type="InterPro" id="IPR000851">
    <property type="entry name" value="Ribosomal_uS5"/>
</dbReference>
<dbReference type="InterPro" id="IPR005712">
    <property type="entry name" value="Ribosomal_uS5_bac-type"/>
</dbReference>
<dbReference type="InterPro" id="IPR005324">
    <property type="entry name" value="Ribosomal_uS5_C"/>
</dbReference>
<dbReference type="InterPro" id="IPR013810">
    <property type="entry name" value="Ribosomal_uS5_N"/>
</dbReference>
<dbReference type="InterPro" id="IPR018192">
    <property type="entry name" value="Ribosomal_uS5_N_CS"/>
</dbReference>
<dbReference type="InterPro" id="IPR014721">
    <property type="entry name" value="Ribsml_uS5_D2-typ_fold_subgr"/>
</dbReference>
<dbReference type="NCBIfam" id="TIGR01021">
    <property type="entry name" value="rpsE_bact"/>
    <property type="match status" value="1"/>
</dbReference>
<dbReference type="PANTHER" id="PTHR48277">
    <property type="entry name" value="MITOCHONDRIAL RIBOSOMAL PROTEIN S5"/>
    <property type="match status" value="1"/>
</dbReference>
<dbReference type="PANTHER" id="PTHR48277:SF1">
    <property type="entry name" value="MITOCHONDRIAL RIBOSOMAL PROTEIN S5"/>
    <property type="match status" value="1"/>
</dbReference>
<dbReference type="Pfam" id="PF00333">
    <property type="entry name" value="Ribosomal_S5"/>
    <property type="match status" value="1"/>
</dbReference>
<dbReference type="Pfam" id="PF03719">
    <property type="entry name" value="Ribosomal_S5_C"/>
    <property type="match status" value="1"/>
</dbReference>
<dbReference type="SUPFAM" id="SSF54768">
    <property type="entry name" value="dsRNA-binding domain-like"/>
    <property type="match status" value="1"/>
</dbReference>
<dbReference type="SUPFAM" id="SSF54211">
    <property type="entry name" value="Ribosomal protein S5 domain 2-like"/>
    <property type="match status" value="1"/>
</dbReference>
<dbReference type="PROSITE" id="PS00585">
    <property type="entry name" value="RIBOSOMAL_S5"/>
    <property type="match status" value="1"/>
</dbReference>
<dbReference type="PROSITE" id="PS50881">
    <property type="entry name" value="S5_DSRBD"/>
    <property type="match status" value="1"/>
</dbReference>
<evidence type="ECO:0000255" key="1">
    <source>
        <dbReference type="HAMAP-Rule" id="MF_01307"/>
    </source>
</evidence>
<evidence type="ECO:0000305" key="2"/>
<accession>Q5HM16</accession>
<comment type="function">
    <text evidence="1">With S4 and S12 plays an important role in translational accuracy.</text>
</comment>
<comment type="function">
    <text evidence="1">Located at the back of the 30S subunit body where it stabilizes the conformation of the head with respect to the body.</text>
</comment>
<comment type="subunit">
    <text evidence="1">Part of the 30S ribosomal subunit. Contacts proteins S4 and S8.</text>
</comment>
<comment type="domain">
    <text>The N-terminal domain interacts with the head of the 30S subunit; the C-terminal domain interacts with the body and contacts protein S4. The interaction surface between S4 and S5 is involved in control of translational fidelity.</text>
</comment>
<comment type="similarity">
    <text evidence="1">Belongs to the universal ribosomal protein uS5 family.</text>
</comment>
<proteinExistence type="inferred from homology"/>
<keyword id="KW-1185">Reference proteome</keyword>
<keyword id="KW-0687">Ribonucleoprotein</keyword>
<keyword id="KW-0689">Ribosomal protein</keyword>
<keyword id="KW-0694">RNA-binding</keyword>
<keyword id="KW-0699">rRNA-binding</keyword>